<dbReference type="EC" id="4.1.1.19" evidence="1"/>
<dbReference type="EMBL" id="CP000503">
    <property type="protein sequence ID" value="ABM25203.1"/>
    <property type="molecule type" value="Genomic_DNA"/>
</dbReference>
<dbReference type="RefSeq" id="WP_011789668.1">
    <property type="nucleotide sequence ID" value="NC_008750.1"/>
</dbReference>
<dbReference type="SMR" id="A1RKK8"/>
<dbReference type="GeneID" id="67443182"/>
<dbReference type="KEGG" id="shw:Sputw3181_2379"/>
<dbReference type="HOGENOM" id="CLU_027243_1_0_6"/>
<dbReference type="UniPathway" id="UPA00186">
    <property type="reaction ID" value="UER00284"/>
</dbReference>
<dbReference type="Proteomes" id="UP000002597">
    <property type="component" value="Chromosome"/>
</dbReference>
<dbReference type="GO" id="GO:0008792">
    <property type="term" value="F:arginine decarboxylase activity"/>
    <property type="evidence" value="ECO:0007669"/>
    <property type="project" value="UniProtKB-UniRule"/>
</dbReference>
<dbReference type="GO" id="GO:0046872">
    <property type="term" value="F:metal ion binding"/>
    <property type="evidence" value="ECO:0007669"/>
    <property type="project" value="UniProtKB-KW"/>
</dbReference>
<dbReference type="GO" id="GO:0006527">
    <property type="term" value="P:arginine catabolic process"/>
    <property type="evidence" value="ECO:0007669"/>
    <property type="project" value="InterPro"/>
</dbReference>
<dbReference type="GO" id="GO:0033388">
    <property type="term" value="P:putrescine biosynthetic process from arginine"/>
    <property type="evidence" value="ECO:0007669"/>
    <property type="project" value="TreeGrafter"/>
</dbReference>
<dbReference type="GO" id="GO:0008295">
    <property type="term" value="P:spermidine biosynthetic process"/>
    <property type="evidence" value="ECO:0007669"/>
    <property type="project" value="UniProtKB-UniRule"/>
</dbReference>
<dbReference type="CDD" id="cd06830">
    <property type="entry name" value="PLPDE_III_ADC"/>
    <property type="match status" value="1"/>
</dbReference>
<dbReference type="FunFam" id="1.10.287.3440:FF:000001">
    <property type="entry name" value="Biosynthetic arginine decarboxylase"/>
    <property type="match status" value="1"/>
</dbReference>
<dbReference type="FunFam" id="1.20.58.930:FF:000001">
    <property type="entry name" value="Biosynthetic arginine decarboxylase"/>
    <property type="match status" value="1"/>
</dbReference>
<dbReference type="FunFam" id="2.40.37.10:FF:000001">
    <property type="entry name" value="Biosynthetic arginine decarboxylase"/>
    <property type="match status" value="1"/>
</dbReference>
<dbReference type="FunFam" id="3.20.20.10:FF:000001">
    <property type="entry name" value="Biosynthetic arginine decarboxylase"/>
    <property type="match status" value="1"/>
</dbReference>
<dbReference type="Gene3D" id="1.10.287.3440">
    <property type="match status" value="1"/>
</dbReference>
<dbReference type="Gene3D" id="1.20.58.930">
    <property type="match status" value="1"/>
</dbReference>
<dbReference type="Gene3D" id="3.20.20.10">
    <property type="entry name" value="Alanine racemase"/>
    <property type="match status" value="1"/>
</dbReference>
<dbReference type="Gene3D" id="2.40.37.10">
    <property type="entry name" value="Lyase, Ornithine Decarboxylase, Chain A, domain 1"/>
    <property type="match status" value="1"/>
</dbReference>
<dbReference type="HAMAP" id="MF_01417">
    <property type="entry name" value="SpeA"/>
    <property type="match status" value="1"/>
</dbReference>
<dbReference type="InterPro" id="IPR009006">
    <property type="entry name" value="Ala_racemase/Decarboxylase_C"/>
</dbReference>
<dbReference type="InterPro" id="IPR040634">
    <property type="entry name" value="Arg_decarb_HB"/>
</dbReference>
<dbReference type="InterPro" id="IPR041128">
    <property type="entry name" value="Arg_decarbox_C"/>
</dbReference>
<dbReference type="InterPro" id="IPR002985">
    <property type="entry name" value="Arg_decrbxlase"/>
</dbReference>
<dbReference type="InterPro" id="IPR022644">
    <property type="entry name" value="De-COase2_N"/>
</dbReference>
<dbReference type="InterPro" id="IPR000183">
    <property type="entry name" value="Orn/DAP/Arg_de-COase"/>
</dbReference>
<dbReference type="InterPro" id="IPR029066">
    <property type="entry name" value="PLP-binding_barrel"/>
</dbReference>
<dbReference type="NCBIfam" id="NF003763">
    <property type="entry name" value="PRK05354.1"/>
    <property type="match status" value="1"/>
</dbReference>
<dbReference type="NCBIfam" id="TIGR01273">
    <property type="entry name" value="speA"/>
    <property type="match status" value="1"/>
</dbReference>
<dbReference type="PANTHER" id="PTHR43295">
    <property type="entry name" value="ARGININE DECARBOXYLASE"/>
    <property type="match status" value="1"/>
</dbReference>
<dbReference type="PANTHER" id="PTHR43295:SF9">
    <property type="entry name" value="BIOSYNTHETIC ARGININE DECARBOXYLASE"/>
    <property type="match status" value="1"/>
</dbReference>
<dbReference type="Pfam" id="PF17810">
    <property type="entry name" value="Arg_decarb_HB"/>
    <property type="match status" value="1"/>
</dbReference>
<dbReference type="Pfam" id="PF17944">
    <property type="entry name" value="Arg_decarbox_C"/>
    <property type="match status" value="1"/>
</dbReference>
<dbReference type="Pfam" id="PF02784">
    <property type="entry name" value="Orn_Arg_deC_N"/>
    <property type="match status" value="1"/>
</dbReference>
<dbReference type="PIRSF" id="PIRSF001336">
    <property type="entry name" value="Arg_decrbxlase"/>
    <property type="match status" value="1"/>
</dbReference>
<dbReference type="PRINTS" id="PR01180">
    <property type="entry name" value="ARGDCRBXLASE"/>
</dbReference>
<dbReference type="PRINTS" id="PR01179">
    <property type="entry name" value="ODADCRBXLASE"/>
</dbReference>
<dbReference type="SUPFAM" id="SSF51419">
    <property type="entry name" value="PLP-binding barrel"/>
    <property type="match status" value="1"/>
</dbReference>
<organism>
    <name type="scientific">Shewanella sp. (strain W3-18-1)</name>
    <dbReference type="NCBI Taxonomy" id="351745"/>
    <lineage>
        <taxon>Bacteria</taxon>
        <taxon>Pseudomonadati</taxon>
        <taxon>Pseudomonadota</taxon>
        <taxon>Gammaproteobacteria</taxon>
        <taxon>Alteromonadales</taxon>
        <taxon>Shewanellaceae</taxon>
        <taxon>Shewanella</taxon>
    </lineage>
</organism>
<comment type="function">
    <text evidence="1">Catalyzes the biosynthesis of agmatine from arginine.</text>
</comment>
<comment type="catalytic activity">
    <reaction evidence="1">
        <text>L-arginine + H(+) = agmatine + CO2</text>
        <dbReference type="Rhea" id="RHEA:17641"/>
        <dbReference type="ChEBI" id="CHEBI:15378"/>
        <dbReference type="ChEBI" id="CHEBI:16526"/>
        <dbReference type="ChEBI" id="CHEBI:32682"/>
        <dbReference type="ChEBI" id="CHEBI:58145"/>
        <dbReference type="EC" id="4.1.1.19"/>
    </reaction>
</comment>
<comment type="cofactor">
    <cofactor evidence="1">
        <name>Mg(2+)</name>
        <dbReference type="ChEBI" id="CHEBI:18420"/>
    </cofactor>
</comment>
<comment type="cofactor">
    <cofactor evidence="1">
        <name>pyridoxal 5'-phosphate</name>
        <dbReference type="ChEBI" id="CHEBI:597326"/>
    </cofactor>
</comment>
<comment type="pathway">
    <text evidence="1">Amine and polyamine biosynthesis; agmatine biosynthesis; agmatine from L-arginine: step 1/1.</text>
</comment>
<comment type="similarity">
    <text evidence="1">Belongs to the Orn/Lys/Arg decarboxylase class-II family. SpeA subfamily.</text>
</comment>
<sequence>MNDWSIDDARAGYNVTHWSQGFYGISDQGEVTVSPDPKNPEYKIGLNELAKDMVKAGVALPVLVRFPQILHHRVNSLCQAFDQAIQKYEYQADYLLVYPIKVNQQQTVVEEILASQASKEVPQLGLEAGSKPELMAVLAMAQKASSVIVCNGYKDNEYIRLALIGEKLGHKVYIVLEKLSELKMVLAESKRLGVTPRLGLRARLAFQGKGKWQASGGEKSKFGLSAAQILTVVDQLKQNDMLDSLQLLHFHLGSQIANIRDIRQGVSEAGRFYCELRELGASVNCFDVGGGLAVDYDGTRSQSNNSMNYGLTEYANNIVNVLTDICNEYAQPMPRIISESGRYLTAHHAVLITDVIGTEAYQPENIQPPAEESPQLLHNMWHSWSEISGRADQRALIEIYHDSQSDLQEAQSLFALGQLSLAERAWAEQANLRVCHEVQGLLSTKNRYHRPIIDELNEKLADKFFVNFSLFQSLPDAWGIDQVFPVLPLSGLDKAPERRAVMLDITCDSDGIVDQYVDGQGIETTLPVPAWSAESPYLIGFFLVGAYQEILGDMHNLFGDTNSAVVRIEENGVTNIESVLAGDTVADVLRYVNLDAVAFMRTYEELVNLHIEEDERAQILEELQVGLKGYTYLEDFS</sequence>
<gene>
    <name evidence="1" type="primary">speA</name>
    <name type="ordered locus">Sputw3181_2379</name>
</gene>
<reference key="1">
    <citation type="submission" date="2006-12" db="EMBL/GenBank/DDBJ databases">
        <title>Complete sequence of Shewanella sp. W3-18-1.</title>
        <authorList>
            <consortium name="US DOE Joint Genome Institute"/>
            <person name="Copeland A."/>
            <person name="Lucas S."/>
            <person name="Lapidus A."/>
            <person name="Barry K."/>
            <person name="Detter J.C."/>
            <person name="Glavina del Rio T."/>
            <person name="Hammon N."/>
            <person name="Israni S."/>
            <person name="Dalin E."/>
            <person name="Tice H."/>
            <person name="Pitluck S."/>
            <person name="Chain P."/>
            <person name="Malfatti S."/>
            <person name="Shin M."/>
            <person name="Vergez L."/>
            <person name="Schmutz J."/>
            <person name="Larimer F."/>
            <person name="Land M."/>
            <person name="Hauser L."/>
            <person name="Kyrpides N."/>
            <person name="Lykidis A."/>
            <person name="Tiedje J."/>
            <person name="Richardson P."/>
        </authorList>
    </citation>
    <scope>NUCLEOTIDE SEQUENCE [LARGE SCALE GENOMIC DNA]</scope>
    <source>
        <strain>W3-18-1</strain>
    </source>
</reference>
<keyword id="KW-0210">Decarboxylase</keyword>
<keyword id="KW-0456">Lyase</keyword>
<keyword id="KW-0460">Magnesium</keyword>
<keyword id="KW-0479">Metal-binding</keyword>
<keyword id="KW-0620">Polyamine biosynthesis</keyword>
<keyword id="KW-0663">Pyridoxal phosphate</keyword>
<keyword id="KW-0745">Spermidine biosynthesis</keyword>
<protein>
    <recommendedName>
        <fullName evidence="1">Biosynthetic arginine decarboxylase</fullName>
        <shortName evidence="1">ADC</shortName>
        <ecNumber evidence="1">4.1.1.19</ecNumber>
    </recommendedName>
</protein>
<feature type="chain" id="PRO_1000024274" description="Biosynthetic arginine decarboxylase">
    <location>
        <begin position="1"/>
        <end position="637"/>
    </location>
</feature>
<feature type="binding site" evidence="1">
    <location>
        <begin position="286"/>
        <end position="296"/>
    </location>
    <ligand>
        <name>substrate</name>
    </ligand>
</feature>
<feature type="modified residue" description="N6-(pyridoxal phosphate)lysine" evidence="1">
    <location>
        <position position="101"/>
    </location>
</feature>
<proteinExistence type="inferred from homology"/>
<evidence type="ECO:0000255" key="1">
    <source>
        <dbReference type="HAMAP-Rule" id="MF_01417"/>
    </source>
</evidence>
<accession>A1RKK8</accession>
<name>SPEA_SHESW</name>